<protein>
    <recommendedName>
        <fullName evidence="1">3-hydroxyacyl-[acyl-carrier-protein] dehydratase FabZ</fullName>
        <ecNumber evidence="1">4.2.1.59</ecNumber>
    </recommendedName>
    <alternativeName>
        <fullName evidence="1">(3R)-hydroxymyristoyl-[acyl-carrier-protein] dehydratase</fullName>
        <shortName evidence="1">(3R)-hydroxymyristoyl-ACP dehydrase</shortName>
    </alternativeName>
    <alternativeName>
        <fullName evidence="1">Beta-hydroxyacyl-ACP dehydratase</fullName>
    </alternativeName>
</protein>
<feature type="chain" id="PRO_0000091764" description="3-hydroxyacyl-[acyl-carrier-protein] dehydratase FabZ">
    <location>
        <begin position="1"/>
        <end position="153"/>
    </location>
</feature>
<feature type="active site" evidence="1">
    <location>
        <position position="57"/>
    </location>
</feature>
<proteinExistence type="inferred from homology"/>
<keyword id="KW-0963">Cytoplasm</keyword>
<keyword id="KW-0441">Lipid A biosynthesis</keyword>
<keyword id="KW-0444">Lipid biosynthesis</keyword>
<keyword id="KW-0443">Lipid metabolism</keyword>
<keyword id="KW-0456">Lyase</keyword>
<keyword id="KW-1185">Reference proteome</keyword>
<name>FABZ_XANCP</name>
<comment type="function">
    <text evidence="1">Involved in unsaturated fatty acids biosynthesis. Catalyzes the dehydration of short chain beta-hydroxyacyl-ACPs and long chain saturated and unsaturated beta-hydroxyacyl-ACPs.</text>
</comment>
<comment type="catalytic activity">
    <reaction evidence="1">
        <text>a (3R)-hydroxyacyl-[ACP] = a (2E)-enoyl-[ACP] + H2O</text>
        <dbReference type="Rhea" id="RHEA:13097"/>
        <dbReference type="Rhea" id="RHEA-COMP:9925"/>
        <dbReference type="Rhea" id="RHEA-COMP:9945"/>
        <dbReference type="ChEBI" id="CHEBI:15377"/>
        <dbReference type="ChEBI" id="CHEBI:78784"/>
        <dbReference type="ChEBI" id="CHEBI:78827"/>
        <dbReference type="EC" id="4.2.1.59"/>
    </reaction>
</comment>
<comment type="subcellular location">
    <subcellularLocation>
        <location evidence="1">Cytoplasm</location>
    </subcellularLocation>
</comment>
<comment type="similarity">
    <text evidence="1">Belongs to the thioester dehydratase family. FabZ subfamily.</text>
</comment>
<sequence length="153" mass="17122">MSHPIYELPIDVNQIQTLIPHRYPFLLIDRVIELDLEAKRIVGQKNVTINEPFFQGHFPTRPVMPGVLIIEALAQAGGVMTQLGLGRDALSKLFYMVKVDNARFNKQVVPGDVLILEVQMKRLIRNMGCYYGEAKVNGEIVASAEVMCAGARE</sequence>
<dbReference type="EC" id="4.2.1.59" evidence="1"/>
<dbReference type="EMBL" id="AE008922">
    <property type="protein sequence ID" value="AAM40660.1"/>
    <property type="molecule type" value="Genomic_DNA"/>
</dbReference>
<dbReference type="RefSeq" id="NP_636736.1">
    <property type="nucleotide sequence ID" value="NC_003902.1"/>
</dbReference>
<dbReference type="RefSeq" id="WP_011036554.1">
    <property type="nucleotide sequence ID" value="NC_003902.1"/>
</dbReference>
<dbReference type="SMR" id="Q8PAW4"/>
<dbReference type="STRING" id="190485.XCC1362"/>
<dbReference type="EnsemblBacteria" id="AAM40660">
    <property type="protein sequence ID" value="AAM40660"/>
    <property type="gene ID" value="XCC1362"/>
</dbReference>
<dbReference type="KEGG" id="xcc:XCC1362"/>
<dbReference type="PATRIC" id="fig|190485.4.peg.1464"/>
<dbReference type="eggNOG" id="COG0764">
    <property type="taxonomic scope" value="Bacteria"/>
</dbReference>
<dbReference type="HOGENOM" id="CLU_078912_1_0_6"/>
<dbReference type="OrthoDB" id="9772788at2"/>
<dbReference type="Proteomes" id="UP000001010">
    <property type="component" value="Chromosome"/>
</dbReference>
<dbReference type="GO" id="GO:0005737">
    <property type="term" value="C:cytoplasm"/>
    <property type="evidence" value="ECO:0007669"/>
    <property type="project" value="UniProtKB-SubCell"/>
</dbReference>
<dbReference type="GO" id="GO:0016020">
    <property type="term" value="C:membrane"/>
    <property type="evidence" value="ECO:0007669"/>
    <property type="project" value="GOC"/>
</dbReference>
<dbReference type="GO" id="GO:0019171">
    <property type="term" value="F:(3R)-hydroxyacyl-[acyl-carrier-protein] dehydratase activity"/>
    <property type="evidence" value="ECO:0007669"/>
    <property type="project" value="UniProtKB-EC"/>
</dbReference>
<dbReference type="GO" id="GO:0006633">
    <property type="term" value="P:fatty acid biosynthetic process"/>
    <property type="evidence" value="ECO:0007669"/>
    <property type="project" value="UniProtKB-UniRule"/>
</dbReference>
<dbReference type="GO" id="GO:0009245">
    <property type="term" value="P:lipid A biosynthetic process"/>
    <property type="evidence" value="ECO:0007669"/>
    <property type="project" value="UniProtKB-UniRule"/>
</dbReference>
<dbReference type="CDD" id="cd01288">
    <property type="entry name" value="FabZ"/>
    <property type="match status" value="1"/>
</dbReference>
<dbReference type="FunFam" id="3.10.129.10:FF:000001">
    <property type="entry name" value="3-hydroxyacyl-[acyl-carrier-protein] dehydratase FabZ"/>
    <property type="match status" value="1"/>
</dbReference>
<dbReference type="Gene3D" id="3.10.129.10">
    <property type="entry name" value="Hotdog Thioesterase"/>
    <property type="match status" value="1"/>
</dbReference>
<dbReference type="HAMAP" id="MF_00406">
    <property type="entry name" value="FabZ"/>
    <property type="match status" value="1"/>
</dbReference>
<dbReference type="InterPro" id="IPR013114">
    <property type="entry name" value="FabA_FabZ"/>
</dbReference>
<dbReference type="InterPro" id="IPR010084">
    <property type="entry name" value="FabZ"/>
</dbReference>
<dbReference type="InterPro" id="IPR029069">
    <property type="entry name" value="HotDog_dom_sf"/>
</dbReference>
<dbReference type="NCBIfam" id="TIGR01750">
    <property type="entry name" value="fabZ"/>
    <property type="match status" value="1"/>
</dbReference>
<dbReference type="NCBIfam" id="NF000582">
    <property type="entry name" value="PRK00006.1"/>
    <property type="match status" value="1"/>
</dbReference>
<dbReference type="PANTHER" id="PTHR30272">
    <property type="entry name" value="3-HYDROXYACYL-[ACYL-CARRIER-PROTEIN] DEHYDRATASE"/>
    <property type="match status" value="1"/>
</dbReference>
<dbReference type="PANTHER" id="PTHR30272:SF1">
    <property type="entry name" value="3-HYDROXYACYL-[ACYL-CARRIER-PROTEIN] DEHYDRATASE"/>
    <property type="match status" value="1"/>
</dbReference>
<dbReference type="Pfam" id="PF07977">
    <property type="entry name" value="FabA"/>
    <property type="match status" value="1"/>
</dbReference>
<dbReference type="SUPFAM" id="SSF54637">
    <property type="entry name" value="Thioesterase/thiol ester dehydrase-isomerase"/>
    <property type="match status" value="1"/>
</dbReference>
<reference key="1">
    <citation type="journal article" date="2002" name="Nature">
        <title>Comparison of the genomes of two Xanthomonas pathogens with differing host specificities.</title>
        <authorList>
            <person name="da Silva A.C.R."/>
            <person name="Ferro J.A."/>
            <person name="Reinach F.C."/>
            <person name="Farah C.S."/>
            <person name="Furlan L.R."/>
            <person name="Quaggio R.B."/>
            <person name="Monteiro-Vitorello C.B."/>
            <person name="Van Sluys M.A."/>
            <person name="Almeida N.F. Jr."/>
            <person name="Alves L.M.C."/>
            <person name="do Amaral A.M."/>
            <person name="Bertolini M.C."/>
            <person name="Camargo L.E.A."/>
            <person name="Camarotte G."/>
            <person name="Cannavan F."/>
            <person name="Cardozo J."/>
            <person name="Chambergo F."/>
            <person name="Ciapina L.P."/>
            <person name="Cicarelli R.M.B."/>
            <person name="Coutinho L.L."/>
            <person name="Cursino-Santos J.R."/>
            <person name="El-Dorry H."/>
            <person name="Faria J.B."/>
            <person name="Ferreira A.J.S."/>
            <person name="Ferreira R.C.C."/>
            <person name="Ferro M.I.T."/>
            <person name="Formighieri E.F."/>
            <person name="Franco M.C."/>
            <person name="Greggio C.C."/>
            <person name="Gruber A."/>
            <person name="Katsuyama A.M."/>
            <person name="Kishi L.T."/>
            <person name="Leite R.P."/>
            <person name="Lemos E.G.M."/>
            <person name="Lemos M.V.F."/>
            <person name="Locali E.C."/>
            <person name="Machado M.A."/>
            <person name="Madeira A.M.B.N."/>
            <person name="Martinez-Rossi N.M."/>
            <person name="Martins E.C."/>
            <person name="Meidanis J."/>
            <person name="Menck C.F.M."/>
            <person name="Miyaki C.Y."/>
            <person name="Moon D.H."/>
            <person name="Moreira L.M."/>
            <person name="Novo M.T.M."/>
            <person name="Okura V.K."/>
            <person name="Oliveira M.C."/>
            <person name="Oliveira V.R."/>
            <person name="Pereira H.A."/>
            <person name="Rossi A."/>
            <person name="Sena J.A.D."/>
            <person name="Silva C."/>
            <person name="de Souza R.F."/>
            <person name="Spinola L.A.F."/>
            <person name="Takita M.A."/>
            <person name="Tamura R.E."/>
            <person name="Teixeira E.C."/>
            <person name="Tezza R.I.D."/>
            <person name="Trindade dos Santos M."/>
            <person name="Truffi D."/>
            <person name="Tsai S.M."/>
            <person name="White F.F."/>
            <person name="Setubal J.C."/>
            <person name="Kitajima J.P."/>
        </authorList>
    </citation>
    <scope>NUCLEOTIDE SEQUENCE [LARGE SCALE GENOMIC DNA]</scope>
    <source>
        <strain>ATCC 33913 / DSM 3586 / NCPPB 528 / LMG 568 / P 25</strain>
    </source>
</reference>
<organism>
    <name type="scientific">Xanthomonas campestris pv. campestris (strain ATCC 33913 / DSM 3586 / NCPPB 528 / LMG 568 / P 25)</name>
    <dbReference type="NCBI Taxonomy" id="190485"/>
    <lineage>
        <taxon>Bacteria</taxon>
        <taxon>Pseudomonadati</taxon>
        <taxon>Pseudomonadota</taxon>
        <taxon>Gammaproteobacteria</taxon>
        <taxon>Lysobacterales</taxon>
        <taxon>Lysobacteraceae</taxon>
        <taxon>Xanthomonas</taxon>
    </lineage>
</organism>
<accession>Q8PAW4</accession>
<gene>
    <name evidence="1" type="primary">fabZ</name>
    <name type="ordered locus">XCC1362</name>
</gene>
<evidence type="ECO:0000255" key="1">
    <source>
        <dbReference type="HAMAP-Rule" id="MF_00406"/>
    </source>
</evidence>